<accession>Q050Y5</accession>
<proteinExistence type="inferred from homology"/>
<keyword id="KW-0687">Ribonucleoprotein</keyword>
<keyword id="KW-0689">Ribosomal protein</keyword>
<dbReference type="EMBL" id="CP000348">
    <property type="protein sequence ID" value="ABJ79110.1"/>
    <property type="molecule type" value="Genomic_DNA"/>
</dbReference>
<dbReference type="RefSeq" id="WP_002728517.1">
    <property type="nucleotide sequence ID" value="NC_008508.1"/>
</dbReference>
<dbReference type="SMR" id="Q050Y5"/>
<dbReference type="KEGG" id="lbl:LBL_1660"/>
<dbReference type="HOGENOM" id="CLU_100590_5_0_12"/>
<dbReference type="GO" id="GO:0005737">
    <property type="term" value="C:cytoplasm"/>
    <property type="evidence" value="ECO:0007669"/>
    <property type="project" value="UniProtKB-ARBA"/>
</dbReference>
<dbReference type="GO" id="GO:0015935">
    <property type="term" value="C:small ribosomal subunit"/>
    <property type="evidence" value="ECO:0007669"/>
    <property type="project" value="TreeGrafter"/>
</dbReference>
<dbReference type="GO" id="GO:0003735">
    <property type="term" value="F:structural constituent of ribosome"/>
    <property type="evidence" value="ECO:0007669"/>
    <property type="project" value="InterPro"/>
</dbReference>
<dbReference type="GO" id="GO:0006412">
    <property type="term" value="P:translation"/>
    <property type="evidence" value="ECO:0007669"/>
    <property type="project" value="UniProtKB-UniRule"/>
</dbReference>
<dbReference type="FunFam" id="3.30.1320.10:FF:000010">
    <property type="entry name" value="30S ribosomal protein S16"/>
    <property type="match status" value="1"/>
</dbReference>
<dbReference type="Gene3D" id="3.30.1320.10">
    <property type="match status" value="1"/>
</dbReference>
<dbReference type="HAMAP" id="MF_00385">
    <property type="entry name" value="Ribosomal_bS16"/>
    <property type="match status" value="1"/>
</dbReference>
<dbReference type="InterPro" id="IPR000307">
    <property type="entry name" value="Ribosomal_bS16"/>
</dbReference>
<dbReference type="InterPro" id="IPR023803">
    <property type="entry name" value="Ribosomal_bS16_dom_sf"/>
</dbReference>
<dbReference type="NCBIfam" id="TIGR00002">
    <property type="entry name" value="S16"/>
    <property type="match status" value="1"/>
</dbReference>
<dbReference type="PANTHER" id="PTHR12919">
    <property type="entry name" value="30S RIBOSOMAL PROTEIN S16"/>
    <property type="match status" value="1"/>
</dbReference>
<dbReference type="PANTHER" id="PTHR12919:SF20">
    <property type="entry name" value="SMALL RIBOSOMAL SUBUNIT PROTEIN BS16M"/>
    <property type="match status" value="1"/>
</dbReference>
<dbReference type="Pfam" id="PF00886">
    <property type="entry name" value="Ribosomal_S16"/>
    <property type="match status" value="1"/>
</dbReference>
<dbReference type="SUPFAM" id="SSF54565">
    <property type="entry name" value="Ribosomal protein S16"/>
    <property type="match status" value="1"/>
</dbReference>
<reference key="1">
    <citation type="journal article" date="2006" name="Proc. Natl. Acad. Sci. U.S.A.">
        <title>Genome reduction in Leptospira borgpetersenii reflects limited transmission potential.</title>
        <authorList>
            <person name="Bulach D.M."/>
            <person name="Zuerner R.L."/>
            <person name="Wilson P."/>
            <person name="Seemann T."/>
            <person name="McGrath A."/>
            <person name="Cullen P.A."/>
            <person name="Davis J."/>
            <person name="Johnson M."/>
            <person name="Kuczek E."/>
            <person name="Alt D.P."/>
            <person name="Peterson-Burch B."/>
            <person name="Coppel R.L."/>
            <person name="Rood J.I."/>
            <person name="Davies J.K."/>
            <person name="Adler B."/>
        </authorList>
    </citation>
    <scope>NUCLEOTIDE SEQUENCE [LARGE SCALE GENOMIC DNA]</scope>
    <source>
        <strain>L550</strain>
    </source>
</reference>
<comment type="similarity">
    <text evidence="1">Belongs to the bacterial ribosomal protein bS16 family.</text>
</comment>
<sequence>MVKLRLQRTGTKHDPHYRIVAADGRAPRDGKFVDIVGHYHPAQIKEQTTFHKEKILTWLKNGARPTETVLNLFKSAGIWAEYKTALKK</sequence>
<feature type="chain" id="PRO_1000049282" description="Small ribosomal subunit protein bS16">
    <location>
        <begin position="1"/>
        <end position="88"/>
    </location>
</feature>
<protein>
    <recommendedName>
        <fullName evidence="1">Small ribosomal subunit protein bS16</fullName>
    </recommendedName>
    <alternativeName>
        <fullName evidence="2">30S ribosomal protein S16</fullName>
    </alternativeName>
</protein>
<name>RS16_LEPBL</name>
<evidence type="ECO:0000255" key="1">
    <source>
        <dbReference type="HAMAP-Rule" id="MF_00385"/>
    </source>
</evidence>
<evidence type="ECO:0000305" key="2"/>
<gene>
    <name evidence="1" type="primary">rpsP</name>
    <name type="ordered locus">LBL_1660</name>
</gene>
<organism>
    <name type="scientific">Leptospira borgpetersenii serovar Hardjo-bovis (strain L550)</name>
    <dbReference type="NCBI Taxonomy" id="355276"/>
    <lineage>
        <taxon>Bacteria</taxon>
        <taxon>Pseudomonadati</taxon>
        <taxon>Spirochaetota</taxon>
        <taxon>Spirochaetia</taxon>
        <taxon>Leptospirales</taxon>
        <taxon>Leptospiraceae</taxon>
        <taxon>Leptospira</taxon>
    </lineage>
</organism>